<evidence type="ECO:0000255" key="1">
    <source>
        <dbReference type="HAMAP-Rule" id="MF_00117"/>
    </source>
</evidence>
<proteinExistence type="inferred from homology"/>
<gene>
    <name evidence="1" type="primary">hslO</name>
    <name type="ordered locus">HI_0810</name>
</gene>
<accession>P44877</accession>
<dbReference type="EMBL" id="L42023">
    <property type="protein sequence ID" value="AAC22469.1"/>
    <property type="molecule type" value="Genomic_DNA"/>
</dbReference>
<dbReference type="PIR" id="H64158">
    <property type="entry name" value="H64158"/>
</dbReference>
<dbReference type="RefSeq" id="NP_438970.1">
    <property type="nucleotide sequence ID" value="NC_000907.1"/>
</dbReference>
<dbReference type="SMR" id="P44877"/>
<dbReference type="STRING" id="71421.HI_0810"/>
<dbReference type="EnsemblBacteria" id="AAC22469">
    <property type="protein sequence ID" value="AAC22469"/>
    <property type="gene ID" value="HI_0810"/>
</dbReference>
<dbReference type="KEGG" id="hin:HI_0810"/>
<dbReference type="PATRIC" id="fig|71421.8.peg.851"/>
<dbReference type="eggNOG" id="COG1281">
    <property type="taxonomic scope" value="Bacteria"/>
</dbReference>
<dbReference type="HOGENOM" id="CLU_054493_0_0_6"/>
<dbReference type="OrthoDB" id="9793753at2"/>
<dbReference type="PhylomeDB" id="P44877"/>
<dbReference type="BioCyc" id="HINF71421:G1GJ1-851-MONOMER"/>
<dbReference type="Proteomes" id="UP000000579">
    <property type="component" value="Chromosome"/>
</dbReference>
<dbReference type="GO" id="GO:0005737">
    <property type="term" value="C:cytoplasm"/>
    <property type="evidence" value="ECO:0000318"/>
    <property type="project" value="GO_Central"/>
</dbReference>
<dbReference type="GO" id="GO:0044183">
    <property type="term" value="F:protein folding chaperone"/>
    <property type="evidence" value="ECO:0000318"/>
    <property type="project" value="GO_Central"/>
</dbReference>
<dbReference type="GO" id="GO:0051082">
    <property type="term" value="F:unfolded protein binding"/>
    <property type="evidence" value="ECO:0007669"/>
    <property type="project" value="UniProtKB-UniRule"/>
</dbReference>
<dbReference type="GO" id="GO:0042026">
    <property type="term" value="P:protein refolding"/>
    <property type="evidence" value="ECO:0000318"/>
    <property type="project" value="GO_Central"/>
</dbReference>
<dbReference type="CDD" id="cd00498">
    <property type="entry name" value="Hsp33"/>
    <property type="match status" value="1"/>
</dbReference>
<dbReference type="Gene3D" id="1.10.287.480">
    <property type="entry name" value="helix hairpin bin"/>
    <property type="match status" value="1"/>
</dbReference>
<dbReference type="Gene3D" id="3.55.30.10">
    <property type="entry name" value="Hsp33 domain"/>
    <property type="match status" value="1"/>
</dbReference>
<dbReference type="Gene3D" id="3.90.1280.10">
    <property type="entry name" value="HSP33 redox switch-like"/>
    <property type="match status" value="1"/>
</dbReference>
<dbReference type="HAMAP" id="MF_00117">
    <property type="entry name" value="HslO"/>
    <property type="match status" value="1"/>
</dbReference>
<dbReference type="InterPro" id="IPR000397">
    <property type="entry name" value="Heat_shock_Hsp33"/>
</dbReference>
<dbReference type="InterPro" id="IPR016154">
    <property type="entry name" value="Heat_shock_Hsp33_C"/>
</dbReference>
<dbReference type="InterPro" id="IPR016153">
    <property type="entry name" value="Heat_shock_Hsp33_N"/>
</dbReference>
<dbReference type="InterPro" id="IPR023212">
    <property type="entry name" value="Hsp33_helix_hairpin_bin_dom_sf"/>
</dbReference>
<dbReference type="NCBIfam" id="NF001033">
    <property type="entry name" value="PRK00114.1"/>
    <property type="match status" value="1"/>
</dbReference>
<dbReference type="PANTHER" id="PTHR30111">
    <property type="entry name" value="33 KDA CHAPERONIN"/>
    <property type="match status" value="1"/>
</dbReference>
<dbReference type="PANTHER" id="PTHR30111:SF1">
    <property type="entry name" value="33 KDA CHAPERONIN"/>
    <property type="match status" value="1"/>
</dbReference>
<dbReference type="Pfam" id="PF01430">
    <property type="entry name" value="HSP33"/>
    <property type="match status" value="1"/>
</dbReference>
<dbReference type="PIRSF" id="PIRSF005261">
    <property type="entry name" value="Heat_shock_Hsp33"/>
    <property type="match status" value="1"/>
</dbReference>
<dbReference type="SUPFAM" id="SSF64397">
    <property type="entry name" value="Hsp33 domain"/>
    <property type="match status" value="1"/>
</dbReference>
<dbReference type="SUPFAM" id="SSF118352">
    <property type="entry name" value="HSP33 redox switch-like"/>
    <property type="match status" value="1"/>
</dbReference>
<reference key="1">
    <citation type="journal article" date="1995" name="Science">
        <title>Whole-genome random sequencing and assembly of Haemophilus influenzae Rd.</title>
        <authorList>
            <person name="Fleischmann R.D."/>
            <person name="Adams M.D."/>
            <person name="White O."/>
            <person name="Clayton R.A."/>
            <person name="Kirkness E.F."/>
            <person name="Kerlavage A.R."/>
            <person name="Bult C.J."/>
            <person name="Tomb J.-F."/>
            <person name="Dougherty B.A."/>
            <person name="Merrick J.M."/>
            <person name="McKenney K."/>
            <person name="Sutton G.G."/>
            <person name="FitzHugh W."/>
            <person name="Fields C.A."/>
            <person name="Gocayne J.D."/>
            <person name="Scott J.D."/>
            <person name="Shirley R."/>
            <person name="Liu L.-I."/>
            <person name="Glodek A."/>
            <person name="Kelley J.M."/>
            <person name="Weidman J.F."/>
            <person name="Phillips C.A."/>
            <person name="Spriggs T."/>
            <person name="Hedblom E."/>
            <person name="Cotton M.D."/>
            <person name="Utterback T.R."/>
            <person name="Hanna M.C."/>
            <person name="Nguyen D.T."/>
            <person name="Saudek D.M."/>
            <person name="Brandon R.C."/>
            <person name="Fine L.D."/>
            <person name="Fritchman J.L."/>
            <person name="Fuhrmann J.L."/>
            <person name="Geoghagen N.S.M."/>
            <person name="Gnehm C.L."/>
            <person name="McDonald L.A."/>
            <person name="Small K.V."/>
            <person name="Fraser C.M."/>
            <person name="Smith H.O."/>
            <person name="Venter J.C."/>
        </authorList>
    </citation>
    <scope>NUCLEOTIDE SEQUENCE [LARGE SCALE GENOMIC DNA]</scope>
    <source>
        <strain>ATCC 51907 / DSM 11121 / KW20 / Rd</strain>
    </source>
</reference>
<sequence>MTNQQDYTQDNDKLYRYLFQHRAVRGEWVRLNKTFTDTLNTHQYPKAVQDLLGEMMVATNLLTATLKFAGNITVQIQGDGPLRLALVNGNDQQQIRALARVDGNITENMSLHNMIGKGVLVITIAPKEGERYQGVISLDKPTITECLEDYFVRSEQLQTQLIIRTGEYEGKPVAAGMLLQIMPDGSGTPEDFEHLTTLAATVKDEELFGLPAEELLYRLYHEETVNLYPAQDVQFFCGCSAERSSSALLLISDEEIDEILAEHKGRIDMQCECCGTHYFFNKEAIEKLKSTRV</sequence>
<comment type="function">
    <text evidence="1">Redox regulated molecular chaperone. Protects both thermally unfolding and oxidatively damaged proteins from irreversible aggregation. Plays an important role in the bacterial defense system toward oxidative stress.</text>
</comment>
<comment type="subcellular location">
    <subcellularLocation>
        <location evidence="1">Cytoplasm</location>
    </subcellularLocation>
</comment>
<comment type="PTM">
    <text evidence="1">Under oxidizing conditions two disulfide bonds are formed involving the reactive cysteines. Under reducing conditions zinc is bound to the reactive cysteines and the protein is inactive.</text>
</comment>
<comment type="similarity">
    <text evidence="1">Belongs to the HSP33 family.</text>
</comment>
<protein>
    <recommendedName>
        <fullName evidence="1">33 kDa chaperonin</fullName>
    </recommendedName>
    <alternativeName>
        <fullName evidence="1">Heat shock protein 33 homolog</fullName>
        <shortName evidence="1">HSP33</shortName>
    </alternativeName>
</protein>
<organism>
    <name type="scientific">Haemophilus influenzae (strain ATCC 51907 / DSM 11121 / KW20 / Rd)</name>
    <dbReference type="NCBI Taxonomy" id="71421"/>
    <lineage>
        <taxon>Bacteria</taxon>
        <taxon>Pseudomonadati</taxon>
        <taxon>Pseudomonadota</taxon>
        <taxon>Gammaproteobacteria</taxon>
        <taxon>Pasteurellales</taxon>
        <taxon>Pasteurellaceae</taxon>
        <taxon>Haemophilus</taxon>
    </lineage>
</organism>
<name>HSLO_HAEIN</name>
<keyword id="KW-0143">Chaperone</keyword>
<keyword id="KW-0963">Cytoplasm</keyword>
<keyword id="KW-1015">Disulfide bond</keyword>
<keyword id="KW-0676">Redox-active center</keyword>
<keyword id="KW-1185">Reference proteome</keyword>
<keyword id="KW-0862">Zinc</keyword>
<feature type="chain" id="PRO_0000192180" description="33 kDa chaperonin">
    <location>
        <begin position="1"/>
        <end position="293"/>
    </location>
</feature>
<feature type="disulfide bond" description="Redox-active" evidence="1">
    <location>
        <begin position="237"/>
        <end position="239"/>
    </location>
</feature>
<feature type="disulfide bond" description="Redox-active" evidence="1">
    <location>
        <begin position="271"/>
        <end position="274"/>
    </location>
</feature>